<comment type="function">
    <text evidence="1">One of the primary rRNA binding proteins, this protein initially binds near the 5'-end of the 23S rRNA. It is important during the early stages of 50S assembly. It makes multiple contacts with different domains of the 23S rRNA in the assembled 50S subunit and ribosome.</text>
</comment>
<comment type="function">
    <text evidence="1">Forms part of the polypeptide exit tunnel.</text>
</comment>
<comment type="subunit">
    <text evidence="1">Part of the 50S ribosomal subunit.</text>
</comment>
<comment type="similarity">
    <text evidence="1">Belongs to the universal ribosomal protein uL4 family.</text>
</comment>
<sequence>MQLNVNDAQAIEVSELTFGGEFNETLVHQAVVAYMAGGRQGSKQQKTRSDVRGGGKRPWRQKGTGRARAGTIRSPIWRGGGTTFAARPQDHTQKLNKKMYRAALRSILAELVRTDRLVVVQDFAVEAPKTKDLLNKLTGMGLTDVLIVSDAVDQNLYLAARNLPHVDVRDVQGSDPVSLIAYDKVLITVSAVKKFEELLG</sequence>
<name>RL4_PSEU2</name>
<accession>Q4ZMP5</accession>
<dbReference type="EMBL" id="CP000075">
    <property type="protein sequence ID" value="AAY39577.1"/>
    <property type="molecule type" value="Genomic_DNA"/>
</dbReference>
<dbReference type="RefSeq" id="WP_002555489.1">
    <property type="nucleotide sequence ID" value="NC_007005.1"/>
</dbReference>
<dbReference type="RefSeq" id="YP_237615.1">
    <property type="nucleotide sequence ID" value="NC_007005.1"/>
</dbReference>
<dbReference type="SMR" id="Q4ZMP5"/>
<dbReference type="STRING" id="205918.Psyr_4547"/>
<dbReference type="GeneID" id="96221029"/>
<dbReference type="KEGG" id="psb:Psyr_4547"/>
<dbReference type="PATRIC" id="fig|205918.7.peg.4686"/>
<dbReference type="eggNOG" id="COG0088">
    <property type="taxonomic scope" value="Bacteria"/>
</dbReference>
<dbReference type="HOGENOM" id="CLU_041575_5_2_6"/>
<dbReference type="OrthoDB" id="9803201at2"/>
<dbReference type="Proteomes" id="UP000000426">
    <property type="component" value="Chromosome"/>
</dbReference>
<dbReference type="GO" id="GO:1990904">
    <property type="term" value="C:ribonucleoprotein complex"/>
    <property type="evidence" value="ECO:0007669"/>
    <property type="project" value="UniProtKB-KW"/>
</dbReference>
<dbReference type="GO" id="GO:0005840">
    <property type="term" value="C:ribosome"/>
    <property type="evidence" value="ECO:0007669"/>
    <property type="project" value="UniProtKB-KW"/>
</dbReference>
<dbReference type="GO" id="GO:0019843">
    <property type="term" value="F:rRNA binding"/>
    <property type="evidence" value="ECO:0007669"/>
    <property type="project" value="UniProtKB-UniRule"/>
</dbReference>
<dbReference type="GO" id="GO:0003735">
    <property type="term" value="F:structural constituent of ribosome"/>
    <property type="evidence" value="ECO:0007669"/>
    <property type="project" value="InterPro"/>
</dbReference>
<dbReference type="GO" id="GO:0006412">
    <property type="term" value="P:translation"/>
    <property type="evidence" value="ECO:0007669"/>
    <property type="project" value="UniProtKB-UniRule"/>
</dbReference>
<dbReference type="FunFam" id="3.40.1370.10:FF:000001">
    <property type="entry name" value="50S ribosomal protein L4"/>
    <property type="match status" value="1"/>
</dbReference>
<dbReference type="Gene3D" id="3.40.1370.10">
    <property type="match status" value="1"/>
</dbReference>
<dbReference type="HAMAP" id="MF_01328_B">
    <property type="entry name" value="Ribosomal_uL4_B"/>
    <property type="match status" value="1"/>
</dbReference>
<dbReference type="InterPro" id="IPR002136">
    <property type="entry name" value="Ribosomal_uL4"/>
</dbReference>
<dbReference type="InterPro" id="IPR013005">
    <property type="entry name" value="Ribosomal_uL4-like"/>
</dbReference>
<dbReference type="InterPro" id="IPR023574">
    <property type="entry name" value="Ribosomal_uL4_dom_sf"/>
</dbReference>
<dbReference type="NCBIfam" id="TIGR03953">
    <property type="entry name" value="rplD_bact"/>
    <property type="match status" value="1"/>
</dbReference>
<dbReference type="PANTHER" id="PTHR10746">
    <property type="entry name" value="50S RIBOSOMAL PROTEIN L4"/>
    <property type="match status" value="1"/>
</dbReference>
<dbReference type="PANTHER" id="PTHR10746:SF6">
    <property type="entry name" value="LARGE RIBOSOMAL SUBUNIT PROTEIN UL4M"/>
    <property type="match status" value="1"/>
</dbReference>
<dbReference type="Pfam" id="PF00573">
    <property type="entry name" value="Ribosomal_L4"/>
    <property type="match status" value="1"/>
</dbReference>
<dbReference type="SUPFAM" id="SSF52166">
    <property type="entry name" value="Ribosomal protein L4"/>
    <property type="match status" value="1"/>
</dbReference>
<proteinExistence type="inferred from homology"/>
<organism>
    <name type="scientific">Pseudomonas syringae pv. syringae (strain B728a)</name>
    <dbReference type="NCBI Taxonomy" id="205918"/>
    <lineage>
        <taxon>Bacteria</taxon>
        <taxon>Pseudomonadati</taxon>
        <taxon>Pseudomonadota</taxon>
        <taxon>Gammaproteobacteria</taxon>
        <taxon>Pseudomonadales</taxon>
        <taxon>Pseudomonadaceae</taxon>
        <taxon>Pseudomonas</taxon>
        <taxon>Pseudomonas syringae</taxon>
    </lineage>
</organism>
<reference key="1">
    <citation type="journal article" date="2005" name="Proc. Natl. Acad. Sci. U.S.A.">
        <title>Comparison of the complete genome sequences of Pseudomonas syringae pv. syringae B728a and pv. tomato DC3000.</title>
        <authorList>
            <person name="Feil H."/>
            <person name="Feil W.S."/>
            <person name="Chain P."/>
            <person name="Larimer F."/>
            <person name="Dibartolo G."/>
            <person name="Copeland A."/>
            <person name="Lykidis A."/>
            <person name="Trong S."/>
            <person name="Nolan M."/>
            <person name="Goltsman E."/>
            <person name="Thiel J."/>
            <person name="Malfatti S."/>
            <person name="Loper J.E."/>
            <person name="Lapidus A."/>
            <person name="Detter J.C."/>
            <person name="Land M."/>
            <person name="Richardson P.M."/>
            <person name="Kyrpides N.C."/>
            <person name="Ivanova N."/>
            <person name="Lindow S.E."/>
        </authorList>
    </citation>
    <scope>NUCLEOTIDE SEQUENCE [LARGE SCALE GENOMIC DNA]</scope>
    <source>
        <strain>B728a</strain>
    </source>
</reference>
<gene>
    <name evidence="1" type="primary">rplD</name>
    <name type="ordered locus">Psyr_4547</name>
</gene>
<keyword id="KW-0687">Ribonucleoprotein</keyword>
<keyword id="KW-0689">Ribosomal protein</keyword>
<keyword id="KW-0694">RNA-binding</keyword>
<keyword id="KW-0699">rRNA-binding</keyword>
<feature type="chain" id="PRO_0000242419" description="Large ribosomal subunit protein uL4">
    <location>
        <begin position="1"/>
        <end position="200"/>
    </location>
</feature>
<feature type="region of interest" description="Disordered" evidence="2">
    <location>
        <begin position="38"/>
        <end position="68"/>
    </location>
</feature>
<feature type="compositionally biased region" description="Basic residues" evidence="2">
    <location>
        <begin position="54"/>
        <end position="65"/>
    </location>
</feature>
<protein>
    <recommendedName>
        <fullName evidence="1">Large ribosomal subunit protein uL4</fullName>
    </recommendedName>
    <alternativeName>
        <fullName evidence="3">50S ribosomal protein L4</fullName>
    </alternativeName>
</protein>
<evidence type="ECO:0000255" key="1">
    <source>
        <dbReference type="HAMAP-Rule" id="MF_01328"/>
    </source>
</evidence>
<evidence type="ECO:0000256" key="2">
    <source>
        <dbReference type="SAM" id="MobiDB-lite"/>
    </source>
</evidence>
<evidence type="ECO:0000305" key="3"/>